<sequence>MGEKQRKLLVLYASQTGNALDAAERIGREAERRGLPASVVSTDEFDTSSLPHHEEAVVFVVSTTGQGDSPDSFKAFWRFLLQRNLGNYWLQQVRYAVFGLGDSGYQKYNFVAKKLDKRLSDLGATTIIEKGLGDDQHPSGYEGTLDPWMLSLWRTLYQINPKYFPKGPDVKIPQDEVIDKPKYRILFHKQEKLEPKLLSDSDIIQRARGMSPGKLFKDKSKPDCFLKMTRNEVLTKAESTKDVRHFEFQFVSSTIEYEVGDVVELLPSQNSSVVDAFIERCGLDPESFITVGPRETENSSFSEEMITQIPIKLKTFVELTMDVTSASPRRYFFEIMSFYATAEHEKERLQYFASPEGRDDLYNYNQKERRSILEVLEDFPSVQIPFDWLVQLVPPLKPRAFSISSSPLAHPAAVHLTVSIVSWITPYKRTRKGLCSSWLASLAPEQEVNIPVWFHKGSLPAPSQSLPLILVGPGTGCAPFRGFIAERAVQAQSSPVAPVMFFFGCRNKDTDFLYRDFWESHAREGGMLSEGKGGGFYTAFSRDQPKKVYVQHKIREMSKRVWDLLCDGAAVYVAGSSTKMPCDVMSAFEDIVSEETGGGSKEVASRWLKALEKTGRYNVEAWS</sequence>
<organism>
    <name type="scientific">Arabidopsis thaliana</name>
    <name type="common">Mouse-ear cress</name>
    <dbReference type="NCBI Taxonomy" id="3702"/>
    <lineage>
        <taxon>Eukaryota</taxon>
        <taxon>Viridiplantae</taxon>
        <taxon>Streptophyta</taxon>
        <taxon>Embryophyta</taxon>
        <taxon>Tracheophyta</taxon>
        <taxon>Spermatophyta</taxon>
        <taxon>Magnoliopsida</taxon>
        <taxon>eudicotyledons</taxon>
        <taxon>Gunneridae</taxon>
        <taxon>Pentapetalae</taxon>
        <taxon>rosids</taxon>
        <taxon>malvids</taxon>
        <taxon>Brassicales</taxon>
        <taxon>Brassicaceae</taxon>
        <taxon>Camelineae</taxon>
        <taxon>Arabidopsis</taxon>
    </lineage>
</organism>
<proteinExistence type="evidence at protein level"/>
<accession>Q6NPS8</accession>
<accession>A0A1I9LRQ3</accession>
<accession>Q9SRU4</accession>
<keyword id="KW-0963">Cytoplasm</keyword>
<keyword id="KW-0274">FAD</keyword>
<keyword id="KW-0285">Flavoprotein</keyword>
<keyword id="KW-0288">FMN</keyword>
<keyword id="KW-0521">NADP</keyword>
<keyword id="KW-0539">Nucleus</keyword>
<keyword id="KW-0560">Oxidoreductase</keyword>
<keyword id="KW-1185">Reference proteome</keyword>
<protein>
    <recommendedName>
        <fullName evidence="1">NADPH-dependent diflavin oxidoreductase 1</fullName>
        <ecNumber evidence="1">1.18.1.-</ecNumber>
    </recommendedName>
    <alternativeName>
        <fullName evidence="1">NADPH-dependent FMN and FAD-containing oxidoreductase</fullName>
    </alternativeName>
</protein>
<reference key="1">
    <citation type="journal article" date="2000" name="Nature">
        <title>Sequence and analysis of chromosome 3 of the plant Arabidopsis thaliana.</title>
        <authorList>
            <person name="Salanoubat M."/>
            <person name="Lemcke K."/>
            <person name="Rieger M."/>
            <person name="Ansorge W."/>
            <person name="Unseld M."/>
            <person name="Fartmann B."/>
            <person name="Valle G."/>
            <person name="Bloecker H."/>
            <person name="Perez-Alonso M."/>
            <person name="Obermaier B."/>
            <person name="Delseny M."/>
            <person name="Boutry M."/>
            <person name="Grivell L.A."/>
            <person name="Mache R."/>
            <person name="Puigdomenech P."/>
            <person name="De Simone V."/>
            <person name="Choisne N."/>
            <person name="Artiguenave F."/>
            <person name="Robert C."/>
            <person name="Brottier P."/>
            <person name="Wincker P."/>
            <person name="Cattolico L."/>
            <person name="Weissenbach J."/>
            <person name="Saurin W."/>
            <person name="Quetier F."/>
            <person name="Schaefer M."/>
            <person name="Mueller-Auer S."/>
            <person name="Gabel C."/>
            <person name="Fuchs M."/>
            <person name="Benes V."/>
            <person name="Wurmbach E."/>
            <person name="Drzonek H."/>
            <person name="Erfle H."/>
            <person name="Jordan N."/>
            <person name="Bangert S."/>
            <person name="Wiedelmann R."/>
            <person name="Kranz H."/>
            <person name="Voss H."/>
            <person name="Holland R."/>
            <person name="Brandt P."/>
            <person name="Nyakatura G."/>
            <person name="Vezzi A."/>
            <person name="D'Angelo M."/>
            <person name="Pallavicini A."/>
            <person name="Toppo S."/>
            <person name="Simionati B."/>
            <person name="Conrad A."/>
            <person name="Hornischer K."/>
            <person name="Kauer G."/>
            <person name="Loehnert T.-H."/>
            <person name="Nordsiek G."/>
            <person name="Reichelt J."/>
            <person name="Scharfe M."/>
            <person name="Schoen O."/>
            <person name="Bargues M."/>
            <person name="Terol J."/>
            <person name="Climent J."/>
            <person name="Navarro P."/>
            <person name="Collado C."/>
            <person name="Perez-Perez A."/>
            <person name="Ottenwaelder B."/>
            <person name="Duchemin D."/>
            <person name="Cooke R."/>
            <person name="Laudie M."/>
            <person name="Berger-Llauro C."/>
            <person name="Purnelle B."/>
            <person name="Masuy D."/>
            <person name="de Haan M."/>
            <person name="Maarse A.C."/>
            <person name="Alcaraz J.-P."/>
            <person name="Cottet A."/>
            <person name="Casacuberta E."/>
            <person name="Monfort A."/>
            <person name="Argiriou A."/>
            <person name="Flores M."/>
            <person name="Liguori R."/>
            <person name="Vitale D."/>
            <person name="Mannhaupt G."/>
            <person name="Haase D."/>
            <person name="Schoof H."/>
            <person name="Rudd S."/>
            <person name="Zaccaria P."/>
            <person name="Mewes H.-W."/>
            <person name="Mayer K.F.X."/>
            <person name="Kaul S."/>
            <person name="Town C.D."/>
            <person name="Koo H.L."/>
            <person name="Tallon L.J."/>
            <person name="Jenkins J."/>
            <person name="Rooney T."/>
            <person name="Rizzo M."/>
            <person name="Walts A."/>
            <person name="Utterback T."/>
            <person name="Fujii C.Y."/>
            <person name="Shea T.P."/>
            <person name="Creasy T.H."/>
            <person name="Haas B."/>
            <person name="Maiti R."/>
            <person name="Wu D."/>
            <person name="Peterson J."/>
            <person name="Van Aken S."/>
            <person name="Pai G."/>
            <person name="Militscher J."/>
            <person name="Sellers P."/>
            <person name="Gill J.E."/>
            <person name="Feldblyum T.V."/>
            <person name="Preuss D."/>
            <person name="Lin X."/>
            <person name="Nierman W.C."/>
            <person name="Salzberg S.L."/>
            <person name="White O."/>
            <person name="Venter J.C."/>
            <person name="Fraser C.M."/>
            <person name="Kaneko T."/>
            <person name="Nakamura Y."/>
            <person name="Sato S."/>
            <person name="Kato T."/>
            <person name="Asamizu E."/>
            <person name="Sasamoto S."/>
            <person name="Kimura T."/>
            <person name="Idesawa K."/>
            <person name="Kawashima K."/>
            <person name="Kishida Y."/>
            <person name="Kiyokawa C."/>
            <person name="Kohara M."/>
            <person name="Matsumoto M."/>
            <person name="Matsuno A."/>
            <person name="Muraki A."/>
            <person name="Nakayama S."/>
            <person name="Nakazaki N."/>
            <person name="Shinpo S."/>
            <person name="Takeuchi C."/>
            <person name="Wada T."/>
            <person name="Watanabe A."/>
            <person name="Yamada M."/>
            <person name="Yasuda M."/>
            <person name="Tabata S."/>
        </authorList>
    </citation>
    <scope>NUCLEOTIDE SEQUENCE [LARGE SCALE GENOMIC DNA]</scope>
    <source>
        <strain>cv. Columbia</strain>
    </source>
</reference>
<reference key="2">
    <citation type="journal article" date="2017" name="Plant J.">
        <title>Araport11: a complete reannotation of the Arabidopsis thaliana reference genome.</title>
        <authorList>
            <person name="Cheng C.Y."/>
            <person name="Krishnakumar V."/>
            <person name="Chan A.P."/>
            <person name="Thibaud-Nissen F."/>
            <person name="Schobel S."/>
            <person name="Town C.D."/>
        </authorList>
    </citation>
    <scope>GENOME REANNOTATION</scope>
    <source>
        <strain>cv. Columbia</strain>
    </source>
</reference>
<reference key="3">
    <citation type="submission" date="2003-11" db="EMBL/GenBank/DDBJ databases">
        <title>Arabidopsis cDNA clones.</title>
        <authorList>
            <person name="Cheuk R.F."/>
            <person name="Chen H."/>
            <person name="Kim C.J."/>
            <person name="Shinn P."/>
            <person name="Carninci P."/>
            <person name="Hayashizaki Y."/>
            <person name="Ishida J."/>
            <person name="Kamiya A."/>
            <person name="Kawai J."/>
            <person name="Narusaka M."/>
            <person name="Sakurai T."/>
            <person name="Satou M."/>
            <person name="Seki M."/>
            <person name="Shinozaki K."/>
            <person name="Ecker J.R."/>
        </authorList>
    </citation>
    <scope>NUCLEOTIDE SEQUENCE [LARGE SCALE MRNA]</scope>
    <source>
        <strain>cv. Columbia</strain>
    </source>
</reference>
<reference key="4">
    <citation type="submission" date="2006-07" db="EMBL/GenBank/DDBJ databases">
        <title>Large-scale analysis of RIKEN Arabidopsis full-length (RAFL) cDNAs.</title>
        <authorList>
            <person name="Totoki Y."/>
            <person name="Seki M."/>
            <person name="Ishida J."/>
            <person name="Nakajima M."/>
            <person name="Enju A."/>
            <person name="Kamiya A."/>
            <person name="Narusaka M."/>
            <person name="Shin-i T."/>
            <person name="Nakagawa M."/>
            <person name="Sakamoto N."/>
            <person name="Oishi K."/>
            <person name="Kohara Y."/>
            <person name="Kobayashi M."/>
            <person name="Toyoda A."/>
            <person name="Sakaki Y."/>
            <person name="Sakurai T."/>
            <person name="Iida K."/>
            <person name="Akiyama K."/>
            <person name="Satou M."/>
            <person name="Toyoda T."/>
            <person name="Konagaya A."/>
            <person name="Carninci P."/>
            <person name="Kawai J."/>
            <person name="Hayashizaki Y."/>
            <person name="Shinozaki K."/>
        </authorList>
    </citation>
    <scope>NUCLEOTIDE SEQUENCE [LARGE SCALE MRNA]</scope>
    <source>
        <strain>cv. Columbia</strain>
    </source>
</reference>
<reference key="5">
    <citation type="journal article" date="2010" name="New Phytol.">
        <title>ATR3 encodes a diflavin reductase essential for Arabidopsis embryo development.</title>
        <authorList>
            <person name="Varadarajan J."/>
            <person name="Guilleminot J."/>
            <person name="Saint-Jore-Dupas C."/>
            <person name="Piegu B."/>
            <person name="Chaboute M.E."/>
            <person name="Gomord V."/>
            <person name="Coolbaugh R.C."/>
            <person name="Devic M."/>
            <person name="Delorme V."/>
        </authorList>
    </citation>
    <scope>FUNCTION</scope>
    <scope>SUBCELLULAR LOCATION</scope>
    <scope>TISSUE SPECIFICITY</scope>
    <scope>DEVELOPMENTAL STAGE</scope>
    <scope>INTERACTION WITH AT5G18400</scope>
    <scope>DISRUPTION PHENOTYPE</scope>
</reference>
<gene>
    <name type="primary">ATR3</name>
    <name type="ordered locus">At3g02280</name>
    <name type="ORF">F14P3.7</name>
</gene>
<comment type="function">
    <text evidence="1 2">NADPH-dependent reductase which is a central component of the cytosolic iron-sulfur (Fe-S) protein assembly (CIA) machinery. Transfers electrons from NADPH via its FAD and FMN prosthetic groups to the [2Fe-2S] cluster of the anamorsin/DRE2 homolog, another key component of the CIA machinery. In turn, this reduced cluster provides electrons for assembly of cytosolic iron-sulfur cluster proteins (By similarity). Catalyzes the NADP-dependent reduction of cytochrome c, but not cytochrome P450 in vitro. Required for embryo development (PubMed:20406405).</text>
</comment>
<comment type="catalytic activity">
    <reaction evidence="1">
        <text>2 oxidized [2Fe-2S]-[protein] + NADPH = 2 reduced [2Fe-2S]-[protein] + NADP(+) + H(+)</text>
        <dbReference type="Rhea" id="RHEA:67716"/>
        <dbReference type="Rhea" id="RHEA-COMP:17327"/>
        <dbReference type="Rhea" id="RHEA-COMP:17328"/>
        <dbReference type="ChEBI" id="CHEBI:15378"/>
        <dbReference type="ChEBI" id="CHEBI:33737"/>
        <dbReference type="ChEBI" id="CHEBI:33738"/>
        <dbReference type="ChEBI" id="CHEBI:57783"/>
        <dbReference type="ChEBI" id="CHEBI:58349"/>
    </reaction>
    <physiologicalReaction direction="left-to-right" evidence="1">
        <dbReference type="Rhea" id="RHEA:67717"/>
    </physiologicalReaction>
</comment>
<comment type="cofactor">
    <cofactor evidence="1">
        <name>FAD</name>
        <dbReference type="ChEBI" id="CHEBI:57692"/>
    </cofactor>
</comment>
<comment type="cofactor">
    <cofactor evidence="1">
        <name>FMN</name>
        <dbReference type="ChEBI" id="CHEBI:58210"/>
    </cofactor>
</comment>
<comment type="subunit">
    <text evidence="2">Interacts with At5g18400.</text>
</comment>
<comment type="subcellular location">
    <subcellularLocation>
        <location evidence="1 2">Cytoplasm</location>
    </subcellularLocation>
    <subcellularLocation>
        <location evidence="2">Nucleus</location>
    </subcellularLocation>
</comment>
<comment type="tissue specificity">
    <text evidence="2">Widely expressed.</text>
</comment>
<comment type="developmental stage">
    <text evidence="2">Expressed in cell cycle-dependent manner. Most abundant at the G2 and G2/M transition. Lowest expression in S and M phases.</text>
</comment>
<comment type="disruption phenotype">
    <text evidence="2">Embryonic lethality when homozygous. Embryo development arrested at 2 to 4-cell stages.</text>
</comment>
<comment type="similarity">
    <text evidence="1">Belongs to the NADPH-dependent diflavin oxidoreductase NDOR1 family.</text>
</comment>
<comment type="similarity">
    <text evidence="1">In the N-terminal section; belongs to the flavodoxin family.</text>
</comment>
<comment type="similarity">
    <text evidence="1">In the C-terminal section; belongs to the flavoprotein pyridine nucleotide cytochrome reductase family.</text>
</comment>
<comment type="sequence caution" evidence="3">
    <conflict type="erroneous gene model prediction">
        <sequence resource="EMBL-CDS" id="AAF02110"/>
    </conflict>
</comment>
<feature type="chain" id="PRO_0000416841" description="NADPH-dependent diflavin oxidoreductase 1">
    <location>
        <begin position="1"/>
        <end position="623"/>
    </location>
</feature>
<feature type="domain" description="Flavodoxin-like" evidence="1">
    <location>
        <begin position="8"/>
        <end position="153"/>
    </location>
</feature>
<feature type="domain" description="FAD-binding FR-type" evidence="1">
    <location>
        <begin position="221"/>
        <end position="467"/>
    </location>
</feature>
<feature type="binding site" evidence="1">
    <location>
        <begin position="14"/>
        <end position="19"/>
    </location>
    <ligand>
        <name>FMN</name>
        <dbReference type="ChEBI" id="CHEBI:58210"/>
    </ligand>
</feature>
<feature type="binding site" evidence="1">
    <location>
        <begin position="62"/>
        <end position="65"/>
    </location>
    <ligand>
        <name>FMN</name>
        <dbReference type="ChEBI" id="CHEBI:58210"/>
    </ligand>
</feature>
<feature type="binding site" evidence="1">
    <location>
        <position position="135"/>
    </location>
    <ligand>
        <name>FMN</name>
        <dbReference type="ChEBI" id="CHEBI:58210"/>
    </ligand>
</feature>
<feature type="binding site" evidence="1">
    <location>
        <position position="369"/>
    </location>
    <ligand>
        <name>FAD</name>
        <dbReference type="ChEBI" id="CHEBI:57692"/>
    </ligand>
</feature>
<feature type="binding site" evidence="1">
    <location>
        <begin position="399"/>
        <end position="402"/>
    </location>
    <ligand>
        <name>FAD</name>
        <dbReference type="ChEBI" id="CHEBI:57692"/>
    </ligand>
</feature>
<feature type="binding site" evidence="1">
    <location>
        <begin position="433"/>
        <end position="436"/>
    </location>
    <ligand>
        <name>FAD</name>
        <dbReference type="ChEBI" id="CHEBI:57692"/>
    </ligand>
</feature>
<feature type="binding site" evidence="1">
    <location>
        <position position="475"/>
    </location>
    <ligand>
        <name>NADP(+)</name>
        <dbReference type="ChEBI" id="CHEBI:58349"/>
    </ligand>
</feature>
<feature type="binding site" evidence="1">
    <location>
        <begin position="541"/>
        <end position="542"/>
    </location>
    <ligand>
        <name>NADP(+)</name>
        <dbReference type="ChEBI" id="CHEBI:58349"/>
    </ligand>
</feature>
<feature type="binding site" evidence="1">
    <location>
        <begin position="547"/>
        <end position="551"/>
    </location>
    <ligand>
        <name>NADP(+)</name>
        <dbReference type="ChEBI" id="CHEBI:58349"/>
    </ligand>
</feature>
<feature type="binding site" evidence="1">
    <location>
        <position position="583"/>
    </location>
    <ligand>
        <name>NADP(+)</name>
        <dbReference type="ChEBI" id="CHEBI:58349"/>
    </ligand>
</feature>
<feature type="binding site" evidence="1">
    <location>
        <position position="622"/>
    </location>
    <ligand>
        <name>FAD</name>
        <dbReference type="ChEBI" id="CHEBI:57692"/>
    </ligand>
</feature>
<name>NDOR1_ARATH</name>
<dbReference type="EC" id="1.18.1.-" evidence="1"/>
<dbReference type="EMBL" id="AC009755">
    <property type="protein sequence ID" value="AAF02110.1"/>
    <property type="status" value="ALT_SEQ"/>
    <property type="molecule type" value="Genomic_DNA"/>
</dbReference>
<dbReference type="EMBL" id="CP002686">
    <property type="protein sequence ID" value="AEE73787.1"/>
    <property type="molecule type" value="Genomic_DNA"/>
</dbReference>
<dbReference type="EMBL" id="CP002686">
    <property type="protein sequence ID" value="ANM65261.1"/>
    <property type="molecule type" value="Genomic_DNA"/>
</dbReference>
<dbReference type="EMBL" id="CP002686">
    <property type="protein sequence ID" value="ANM65262.1"/>
    <property type="molecule type" value="Genomic_DNA"/>
</dbReference>
<dbReference type="EMBL" id="BT010739">
    <property type="protein sequence ID" value="AAR23709.1"/>
    <property type="molecule type" value="mRNA"/>
</dbReference>
<dbReference type="EMBL" id="AK229452">
    <property type="protein sequence ID" value="BAF01311.1"/>
    <property type="molecule type" value="mRNA"/>
</dbReference>
<dbReference type="RefSeq" id="NP_001327241.1">
    <property type="nucleotide sequence ID" value="NM_001337391.1"/>
</dbReference>
<dbReference type="RefSeq" id="NP_001327242.1">
    <property type="nucleotide sequence ID" value="NM_001337392.1"/>
</dbReference>
<dbReference type="RefSeq" id="NP_186877.2">
    <property type="nucleotide sequence ID" value="NM_111095.5"/>
</dbReference>
<dbReference type="SMR" id="Q6NPS8"/>
<dbReference type="BioGRID" id="5751">
    <property type="interactions" value="1"/>
</dbReference>
<dbReference type="FunCoup" id="Q6NPS8">
    <property type="interactions" value="3463"/>
</dbReference>
<dbReference type="STRING" id="3702.Q6NPS8"/>
<dbReference type="iPTMnet" id="Q6NPS8"/>
<dbReference type="PaxDb" id="3702-AT3G02280.1"/>
<dbReference type="ProteomicsDB" id="251144"/>
<dbReference type="EnsemblPlants" id="AT3G02280.1">
    <property type="protein sequence ID" value="AT3G02280.1"/>
    <property type="gene ID" value="AT3G02280"/>
</dbReference>
<dbReference type="EnsemblPlants" id="AT3G02280.2">
    <property type="protein sequence ID" value="AT3G02280.2"/>
    <property type="gene ID" value="AT3G02280"/>
</dbReference>
<dbReference type="EnsemblPlants" id="AT3G02280.3">
    <property type="protein sequence ID" value="AT3G02280.3"/>
    <property type="gene ID" value="AT3G02280"/>
</dbReference>
<dbReference type="GeneID" id="820417"/>
<dbReference type="Gramene" id="AT3G02280.1">
    <property type="protein sequence ID" value="AT3G02280.1"/>
    <property type="gene ID" value="AT3G02280"/>
</dbReference>
<dbReference type="Gramene" id="AT3G02280.2">
    <property type="protein sequence ID" value="AT3G02280.2"/>
    <property type="gene ID" value="AT3G02280"/>
</dbReference>
<dbReference type="Gramene" id="AT3G02280.3">
    <property type="protein sequence ID" value="AT3G02280.3"/>
    <property type="gene ID" value="AT3G02280"/>
</dbReference>
<dbReference type="KEGG" id="ath:AT3G02280"/>
<dbReference type="Araport" id="AT3G02280"/>
<dbReference type="TAIR" id="AT3G02280">
    <property type="gene designation" value="TAH18"/>
</dbReference>
<dbReference type="eggNOG" id="KOG1159">
    <property type="taxonomic scope" value="Eukaryota"/>
</dbReference>
<dbReference type="HOGENOM" id="CLU_001570_17_6_1"/>
<dbReference type="InParanoid" id="Q6NPS8"/>
<dbReference type="OMA" id="DIMSIPR"/>
<dbReference type="PhylomeDB" id="Q6NPS8"/>
<dbReference type="BioCyc" id="ARA:AT3G02280-MONOMER"/>
<dbReference type="PRO" id="PR:Q6NPS8"/>
<dbReference type="Proteomes" id="UP000006548">
    <property type="component" value="Chromosome 3"/>
</dbReference>
<dbReference type="ExpressionAtlas" id="Q6NPS8">
    <property type="expression patterns" value="baseline and differential"/>
</dbReference>
<dbReference type="GO" id="GO:0005737">
    <property type="term" value="C:cytoplasm"/>
    <property type="evidence" value="ECO:0000314"/>
    <property type="project" value="UniProtKB"/>
</dbReference>
<dbReference type="GO" id="GO:0005634">
    <property type="term" value="C:nucleus"/>
    <property type="evidence" value="ECO:0000314"/>
    <property type="project" value="UniProtKB"/>
</dbReference>
<dbReference type="GO" id="GO:0050660">
    <property type="term" value="F:flavin adenine dinucleotide binding"/>
    <property type="evidence" value="ECO:0007669"/>
    <property type="project" value="UniProtKB-UniRule"/>
</dbReference>
<dbReference type="GO" id="GO:0010181">
    <property type="term" value="F:FMN binding"/>
    <property type="evidence" value="ECO:0007669"/>
    <property type="project" value="UniProtKB-UniRule"/>
</dbReference>
<dbReference type="GO" id="GO:0050661">
    <property type="term" value="F:NADP binding"/>
    <property type="evidence" value="ECO:0007669"/>
    <property type="project" value="UniProtKB-UniRule"/>
</dbReference>
<dbReference type="GO" id="GO:0003958">
    <property type="term" value="F:NADPH-hemoprotein reductase activity"/>
    <property type="evidence" value="ECO:0007669"/>
    <property type="project" value="InterPro"/>
</dbReference>
<dbReference type="GO" id="GO:0016651">
    <property type="term" value="F:oxidoreductase activity, acting on NAD(P)H"/>
    <property type="evidence" value="ECO:0000314"/>
    <property type="project" value="UniProtKB"/>
</dbReference>
<dbReference type="GO" id="GO:0009793">
    <property type="term" value="P:embryo development ending in seed dormancy"/>
    <property type="evidence" value="ECO:0000315"/>
    <property type="project" value="UniProtKB"/>
</dbReference>
<dbReference type="GO" id="GO:0016226">
    <property type="term" value="P:iron-sulfur cluster assembly"/>
    <property type="evidence" value="ECO:0007669"/>
    <property type="project" value="UniProtKB-UniRule"/>
</dbReference>
<dbReference type="CDD" id="cd06207">
    <property type="entry name" value="CyPoR_like"/>
    <property type="match status" value="1"/>
</dbReference>
<dbReference type="FunFam" id="1.20.990.10:FF:000015">
    <property type="entry name" value="NADPH-dependent diflavin oxidoreductase 1"/>
    <property type="match status" value="1"/>
</dbReference>
<dbReference type="FunFam" id="3.40.50.360:FF:000015">
    <property type="entry name" value="NADPH-dependent diflavin oxidoreductase 1"/>
    <property type="match status" value="1"/>
</dbReference>
<dbReference type="FunFam" id="3.40.50.80:FF:000032">
    <property type="entry name" value="NADPH-dependent diflavin oxidoreductase 1"/>
    <property type="match status" value="1"/>
</dbReference>
<dbReference type="Gene3D" id="3.40.50.360">
    <property type="match status" value="1"/>
</dbReference>
<dbReference type="Gene3D" id="1.20.990.10">
    <property type="entry name" value="NADPH-cytochrome p450 Reductase, Chain A, domain 3"/>
    <property type="match status" value="1"/>
</dbReference>
<dbReference type="Gene3D" id="3.40.50.80">
    <property type="entry name" value="Nucleotide-binding domain of ferredoxin-NADP reductase (FNR) module"/>
    <property type="match status" value="1"/>
</dbReference>
<dbReference type="Gene3D" id="2.40.30.10">
    <property type="entry name" value="Translation factors"/>
    <property type="match status" value="1"/>
</dbReference>
<dbReference type="HAMAP" id="MF_03178">
    <property type="entry name" value="NDOR1"/>
    <property type="match status" value="1"/>
</dbReference>
<dbReference type="InterPro" id="IPR003097">
    <property type="entry name" value="CysJ-like_FAD-binding"/>
</dbReference>
<dbReference type="InterPro" id="IPR017927">
    <property type="entry name" value="FAD-bd_FR_type"/>
</dbReference>
<dbReference type="InterPro" id="IPR001094">
    <property type="entry name" value="Flavdoxin-like"/>
</dbReference>
<dbReference type="InterPro" id="IPR008254">
    <property type="entry name" value="Flavodoxin/NO_synth"/>
</dbReference>
<dbReference type="InterPro" id="IPR001709">
    <property type="entry name" value="Flavoprot_Pyr_Nucl_cyt_Rdtase"/>
</dbReference>
<dbReference type="InterPro" id="IPR029039">
    <property type="entry name" value="Flavoprotein-like_sf"/>
</dbReference>
<dbReference type="InterPro" id="IPR039261">
    <property type="entry name" value="FNR_nucleotide-bd"/>
</dbReference>
<dbReference type="InterPro" id="IPR023173">
    <property type="entry name" value="NADPH_Cyt_P450_Rdtase_alpha"/>
</dbReference>
<dbReference type="InterPro" id="IPR028879">
    <property type="entry name" value="NDOR1"/>
</dbReference>
<dbReference type="InterPro" id="IPR001433">
    <property type="entry name" value="OxRdtase_FAD/NAD-bd"/>
</dbReference>
<dbReference type="InterPro" id="IPR017938">
    <property type="entry name" value="Riboflavin_synthase-like_b-brl"/>
</dbReference>
<dbReference type="PANTHER" id="PTHR19384:SF10">
    <property type="entry name" value="NADPH-DEPENDENT DIFLAVIN OXIDOREDUCTASE 1"/>
    <property type="match status" value="1"/>
</dbReference>
<dbReference type="PANTHER" id="PTHR19384">
    <property type="entry name" value="NITRIC OXIDE SYNTHASE-RELATED"/>
    <property type="match status" value="1"/>
</dbReference>
<dbReference type="Pfam" id="PF00667">
    <property type="entry name" value="FAD_binding_1"/>
    <property type="match status" value="1"/>
</dbReference>
<dbReference type="Pfam" id="PF00258">
    <property type="entry name" value="Flavodoxin_1"/>
    <property type="match status" value="1"/>
</dbReference>
<dbReference type="Pfam" id="PF00175">
    <property type="entry name" value="NAD_binding_1"/>
    <property type="match status" value="1"/>
</dbReference>
<dbReference type="PRINTS" id="PR00369">
    <property type="entry name" value="FLAVODOXIN"/>
</dbReference>
<dbReference type="PRINTS" id="PR00371">
    <property type="entry name" value="FPNCR"/>
</dbReference>
<dbReference type="SUPFAM" id="SSF52343">
    <property type="entry name" value="Ferredoxin reductase-like, C-terminal NADP-linked domain"/>
    <property type="match status" value="1"/>
</dbReference>
<dbReference type="SUPFAM" id="SSF52218">
    <property type="entry name" value="Flavoproteins"/>
    <property type="match status" value="1"/>
</dbReference>
<dbReference type="SUPFAM" id="SSF63380">
    <property type="entry name" value="Riboflavin synthase domain-like"/>
    <property type="match status" value="1"/>
</dbReference>
<dbReference type="PROSITE" id="PS51384">
    <property type="entry name" value="FAD_FR"/>
    <property type="match status" value="1"/>
</dbReference>
<dbReference type="PROSITE" id="PS50902">
    <property type="entry name" value="FLAVODOXIN_LIKE"/>
    <property type="match status" value="1"/>
</dbReference>
<evidence type="ECO:0000255" key="1">
    <source>
        <dbReference type="HAMAP-Rule" id="MF_03178"/>
    </source>
</evidence>
<evidence type="ECO:0000269" key="2">
    <source>
    </source>
</evidence>
<evidence type="ECO:0000305" key="3"/>